<evidence type="ECO:0000250" key="1">
    <source>
        <dbReference type="UniProtKB" id="P11411"/>
    </source>
</evidence>
<evidence type="ECO:0000250" key="2">
    <source>
        <dbReference type="UniProtKB" id="P11413"/>
    </source>
</evidence>
<evidence type="ECO:0000269" key="3">
    <source>
    </source>
</evidence>
<evidence type="ECO:0000305" key="4"/>
<gene>
    <name type="primary">ZWF1</name>
    <name type="ordered locus">ECU08_1850</name>
</gene>
<dbReference type="EC" id="1.1.1.49" evidence="2"/>
<dbReference type="EMBL" id="AL590448">
    <property type="protein sequence ID" value="CAD26488.1"/>
    <property type="molecule type" value="Genomic_DNA"/>
</dbReference>
<dbReference type="RefSeq" id="NP_597312.1">
    <property type="nucleotide sequence ID" value="NM_001041921.1"/>
</dbReference>
<dbReference type="SMR" id="Q8SR89"/>
<dbReference type="FunCoup" id="Q8SR89">
    <property type="interactions" value="114"/>
</dbReference>
<dbReference type="STRING" id="284813.Q8SR89"/>
<dbReference type="GeneID" id="859734"/>
<dbReference type="KEGG" id="ecu:ECU08_1850"/>
<dbReference type="VEuPathDB" id="MicrosporidiaDB:ECU08_1850"/>
<dbReference type="HOGENOM" id="CLU_051220_0_0_1"/>
<dbReference type="InParanoid" id="Q8SR89"/>
<dbReference type="OMA" id="TLIYDCL"/>
<dbReference type="OrthoDB" id="60984at2759"/>
<dbReference type="UniPathway" id="UPA00115">
    <property type="reaction ID" value="UER00408"/>
</dbReference>
<dbReference type="Proteomes" id="UP000000819">
    <property type="component" value="Chromosome VIII"/>
</dbReference>
<dbReference type="GO" id="GO:0004345">
    <property type="term" value="F:glucose-6-phosphate dehydrogenase activity"/>
    <property type="evidence" value="ECO:0007669"/>
    <property type="project" value="UniProtKB-EC"/>
</dbReference>
<dbReference type="GO" id="GO:0050661">
    <property type="term" value="F:NADP binding"/>
    <property type="evidence" value="ECO:0007669"/>
    <property type="project" value="InterPro"/>
</dbReference>
<dbReference type="GO" id="GO:0006006">
    <property type="term" value="P:glucose metabolic process"/>
    <property type="evidence" value="ECO:0007669"/>
    <property type="project" value="UniProtKB-KW"/>
</dbReference>
<dbReference type="GO" id="GO:0009051">
    <property type="term" value="P:pentose-phosphate shunt, oxidative branch"/>
    <property type="evidence" value="ECO:0007669"/>
    <property type="project" value="TreeGrafter"/>
</dbReference>
<dbReference type="Gene3D" id="3.30.360.10">
    <property type="entry name" value="Dihydrodipicolinate Reductase, domain 2"/>
    <property type="match status" value="1"/>
</dbReference>
<dbReference type="Gene3D" id="3.40.50.720">
    <property type="entry name" value="NAD(P)-binding Rossmann-like Domain"/>
    <property type="match status" value="1"/>
</dbReference>
<dbReference type="HAMAP" id="MF_00966">
    <property type="entry name" value="G6PD"/>
    <property type="match status" value="1"/>
</dbReference>
<dbReference type="InterPro" id="IPR001282">
    <property type="entry name" value="G6P_DH"/>
</dbReference>
<dbReference type="InterPro" id="IPR022675">
    <property type="entry name" value="G6P_DH_C"/>
</dbReference>
<dbReference type="InterPro" id="IPR022674">
    <property type="entry name" value="G6P_DH_NAD-bd"/>
</dbReference>
<dbReference type="InterPro" id="IPR036291">
    <property type="entry name" value="NAD(P)-bd_dom_sf"/>
</dbReference>
<dbReference type="PANTHER" id="PTHR23429:SF0">
    <property type="entry name" value="GLUCOSE-6-PHOSPHATE 1-DEHYDROGENASE"/>
    <property type="match status" value="1"/>
</dbReference>
<dbReference type="PANTHER" id="PTHR23429">
    <property type="entry name" value="GLUCOSE-6-PHOSPHATE 1-DEHYDROGENASE G6PD"/>
    <property type="match status" value="1"/>
</dbReference>
<dbReference type="Pfam" id="PF02781">
    <property type="entry name" value="G6PD_C"/>
    <property type="match status" value="1"/>
</dbReference>
<dbReference type="Pfam" id="PF00479">
    <property type="entry name" value="G6PD_N"/>
    <property type="match status" value="1"/>
</dbReference>
<dbReference type="PIRSF" id="PIRSF000110">
    <property type="entry name" value="G6PD"/>
    <property type="match status" value="1"/>
</dbReference>
<dbReference type="PRINTS" id="PR00079">
    <property type="entry name" value="G6PDHDRGNASE"/>
</dbReference>
<dbReference type="SUPFAM" id="SSF55347">
    <property type="entry name" value="Glyceraldehyde-3-phosphate dehydrogenase-like, C-terminal domain"/>
    <property type="match status" value="1"/>
</dbReference>
<dbReference type="SUPFAM" id="SSF51735">
    <property type="entry name" value="NAD(P)-binding Rossmann-fold domains"/>
    <property type="match status" value="1"/>
</dbReference>
<name>G6PD_ENCCU</name>
<reference key="1">
    <citation type="journal article" date="2001" name="Nature">
        <title>Genome sequence and gene compaction of the eukaryote parasite Encephalitozoon cuniculi.</title>
        <authorList>
            <person name="Katinka M.D."/>
            <person name="Duprat S."/>
            <person name="Cornillot E."/>
            <person name="Metenier G."/>
            <person name="Thomarat F."/>
            <person name="Prensier G."/>
            <person name="Barbe V."/>
            <person name="Peyretaillade E."/>
            <person name="Brottier P."/>
            <person name="Wincker P."/>
            <person name="Delbac F."/>
            <person name="El Alaoui H."/>
            <person name="Peyret P."/>
            <person name="Saurin W."/>
            <person name="Gouy M."/>
            <person name="Weissenbach J."/>
            <person name="Vivares C.P."/>
        </authorList>
    </citation>
    <scope>NUCLEOTIDE SEQUENCE [LARGE SCALE GENOMIC DNA]</scope>
    <source>
        <strain>GB-M1</strain>
    </source>
</reference>
<reference key="2">
    <citation type="journal article" date="2006" name="Proteomics">
        <title>Proteomic analysis of the eukaryotic parasite Encephalitozoon cuniculi (microsporidia): a reference map for proteins expressed in late sporogonial stages.</title>
        <authorList>
            <person name="Brosson D."/>
            <person name="Kuhn L."/>
            <person name="Delbac F."/>
            <person name="Garin J."/>
            <person name="Vivares C.P."/>
            <person name="Texier C."/>
        </authorList>
    </citation>
    <scope>IDENTIFICATION BY MASS SPECTROMETRY [LARGE SCALE ANALYSIS]</scope>
    <scope>DEVELOPMENTAL STAGE</scope>
</reference>
<keyword id="KW-0119">Carbohydrate metabolism</keyword>
<keyword id="KW-0313">Glucose metabolism</keyword>
<keyword id="KW-0521">NADP</keyword>
<keyword id="KW-0560">Oxidoreductase</keyword>
<keyword id="KW-1185">Reference proteome</keyword>
<comment type="function">
    <text evidence="2">Catalyzes the rate-limiting step of the oxidative pentose-phosphate pathway, which represents a route for the dissimilation of carbohydrates besides glycolysis. The main function of this enzyme is to provide reducing power (NADPH) and pentose phosphates for fatty acid and nucleic acid synthesis (By similarity).</text>
</comment>
<comment type="catalytic activity">
    <reaction evidence="2">
        <text>D-glucose 6-phosphate + NADP(+) = 6-phospho-D-glucono-1,5-lactone + NADPH + H(+)</text>
        <dbReference type="Rhea" id="RHEA:15841"/>
        <dbReference type="ChEBI" id="CHEBI:15378"/>
        <dbReference type="ChEBI" id="CHEBI:57783"/>
        <dbReference type="ChEBI" id="CHEBI:57955"/>
        <dbReference type="ChEBI" id="CHEBI:58349"/>
        <dbReference type="ChEBI" id="CHEBI:61548"/>
        <dbReference type="EC" id="1.1.1.49"/>
    </reaction>
</comment>
<comment type="pathway">
    <text evidence="4">Carbohydrate degradation; pentose phosphate pathway; D-ribulose 5-phosphate from D-glucose 6-phosphate (oxidative stage): step 1/3.</text>
</comment>
<comment type="developmental stage">
    <text evidence="3">Expressed in late sporogonial stages.</text>
</comment>
<comment type="similarity">
    <text evidence="4">Belongs to the glucose-6-phosphate dehydrogenase family.</text>
</comment>
<accession>Q8SR89</accession>
<sequence>MKVVIFGSSGDLAKRKLFPALSRIDLEGVGVVGYARTKYNIEFSEVLQEVGNYSPEFLSKVTYIPGPYDDLSKLKEVSDSETVLYFSVPSSVYTCLFREISKLDYKVIGVEKPYGDSIESFMEIKGFDLGKTRFIDHYLLKPLVVAMPGIIRETGAIREVMSNRYVKSVEIVSKEVLGGEGRHYFDKNGIIRDMVLSHMGELLGVVASDVTKPSRIMEALARMEVFKACTVDTERCIYGQYDDYIKEIHKDSSTETFCMVPISIGTPRWSKVPFIIVAGKGMNEKRTEIILEFRRDVFAKCIELFSMPRQSSCRIVHTNEIETVRLVFNIYPECEVFLEVLVGGEPVRYVLHDKKEIDGLMHDSYGGYHDYEIIFDSLVRGKDFSSVSSQEAELLWKVFNPILSISKEDMLFYYSKGIDMPKEAEEMIREIKDH</sequence>
<feature type="chain" id="PRO_0000381752" description="Glucose-6-phosphate 1-dehydrogenase">
    <location>
        <begin position="1"/>
        <end position="434"/>
    </location>
</feature>
<feature type="active site" description="Proton acceptor" evidence="1">
    <location>
        <position position="198"/>
    </location>
</feature>
<feature type="binding site" evidence="2">
    <location>
        <begin position="7"/>
        <end position="14"/>
    </location>
    <ligand>
        <name>NADP(+)</name>
        <dbReference type="ChEBI" id="CHEBI:58349"/>
        <label>1</label>
    </ligand>
</feature>
<feature type="binding site" evidence="2">
    <location>
        <position position="36"/>
    </location>
    <ligand>
        <name>NADP(+)</name>
        <dbReference type="ChEBI" id="CHEBI:58349"/>
        <label>1</label>
    </ligand>
</feature>
<feature type="binding site" evidence="2">
    <location>
        <position position="93"/>
    </location>
    <ligand>
        <name>NADP(+)</name>
        <dbReference type="ChEBI" id="CHEBI:58349"/>
        <label>1</label>
    </ligand>
</feature>
<feature type="binding site" evidence="2">
    <location>
        <position position="112"/>
    </location>
    <ligand>
        <name>D-glucose 6-phosphate</name>
        <dbReference type="ChEBI" id="CHEBI:61548"/>
    </ligand>
</feature>
<feature type="binding site" evidence="2">
    <location>
        <position position="112"/>
    </location>
    <ligand>
        <name>NADP(+)</name>
        <dbReference type="ChEBI" id="CHEBI:58349"/>
        <label>1</label>
    </ligand>
</feature>
<feature type="binding site" evidence="2">
    <location>
        <begin position="137"/>
        <end position="141"/>
    </location>
    <ligand>
        <name>D-glucose 6-phosphate</name>
        <dbReference type="ChEBI" id="CHEBI:61548"/>
    </ligand>
</feature>
<feature type="binding site" evidence="2">
    <location>
        <position position="175"/>
    </location>
    <ligand>
        <name>D-glucose 6-phosphate</name>
        <dbReference type="ChEBI" id="CHEBI:61548"/>
    </ligand>
</feature>
<feature type="binding site" evidence="2">
    <location>
        <position position="193"/>
    </location>
    <ligand>
        <name>D-glucose 6-phosphate</name>
        <dbReference type="ChEBI" id="CHEBI:61548"/>
    </ligand>
</feature>
<feature type="binding site" evidence="2">
    <location>
        <position position="280"/>
    </location>
    <ligand>
        <name>D-glucose 6-phosphate</name>
        <dbReference type="ChEBI" id="CHEBI:61548"/>
    </ligand>
</feature>
<feature type="binding site" evidence="2">
    <location>
        <position position="285"/>
    </location>
    <ligand>
        <name>D-glucose 6-phosphate</name>
        <dbReference type="ChEBI" id="CHEBI:61548"/>
    </ligand>
</feature>
<feature type="binding site" evidence="2">
    <location>
        <position position="286"/>
    </location>
    <ligand>
        <name>NADP(+)</name>
        <dbReference type="ChEBI" id="CHEBI:58349"/>
        <label>2</label>
    </ligand>
</feature>
<protein>
    <recommendedName>
        <fullName>Glucose-6-phosphate 1-dehydrogenase</fullName>
        <shortName>G6PD</shortName>
        <ecNumber evidence="2">1.1.1.49</ecNumber>
    </recommendedName>
</protein>
<proteinExistence type="evidence at protein level"/>
<organism>
    <name type="scientific">Encephalitozoon cuniculi (strain GB-M1)</name>
    <name type="common">Microsporidian parasite</name>
    <dbReference type="NCBI Taxonomy" id="284813"/>
    <lineage>
        <taxon>Eukaryota</taxon>
        <taxon>Fungi</taxon>
        <taxon>Fungi incertae sedis</taxon>
        <taxon>Microsporidia</taxon>
        <taxon>Unikaryonidae</taxon>
        <taxon>Encephalitozoon</taxon>
    </lineage>
</organism>